<organism>
    <name type="scientific">Mus musculus</name>
    <name type="common">Mouse</name>
    <dbReference type="NCBI Taxonomy" id="10090"/>
    <lineage>
        <taxon>Eukaryota</taxon>
        <taxon>Metazoa</taxon>
        <taxon>Chordata</taxon>
        <taxon>Craniata</taxon>
        <taxon>Vertebrata</taxon>
        <taxon>Euteleostomi</taxon>
        <taxon>Mammalia</taxon>
        <taxon>Eutheria</taxon>
        <taxon>Euarchontoglires</taxon>
        <taxon>Glires</taxon>
        <taxon>Rodentia</taxon>
        <taxon>Myomorpha</taxon>
        <taxon>Muroidea</taxon>
        <taxon>Muridae</taxon>
        <taxon>Murinae</taxon>
        <taxon>Mus</taxon>
        <taxon>Mus</taxon>
    </lineage>
</organism>
<keyword id="KW-0158">Chromosome</keyword>
<keyword id="KW-0963">Cytoplasm</keyword>
<keyword id="KW-0227">DNA damage</keyword>
<keyword id="KW-0233">DNA recombination</keyword>
<keyword id="KW-0234">DNA repair</keyword>
<keyword id="KW-0341">Growth regulation</keyword>
<keyword id="KW-0539">Nucleus</keyword>
<keyword id="KW-0597">Phosphoprotein</keyword>
<keyword id="KW-1185">Reference proteome</keyword>
<keyword id="KW-0779">Telomere</keyword>
<keyword id="KW-0825">Tumor antigen</keyword>
<keyword id="KW-0833">Ubl conjugation pathway</keyword>
<evidence type="ECO:0000250" key="1"/>
<evidence type="ECO:0000250" key="2">
    <source>
        <dbReference type="UniProtKB" id="Q96MG7"/>
    </source>
</evidence>
<evidence type="ECO:0000255" key="3">
    <source>
        <dbReference type="PROSITE-ProRule" id="PRU00127"/>
    </source>
</evidence>
<evidence type="ECO:0000256" key="4">
    <source>
        <dbReference type="SAM" id="MobiDB-lite"/>
    </source>
</evidence>
<evidence type="ECO:0000269" key="5">
    <source>
    </source>
</evidence>
<evidence type="ECO:0000269" key="6">
    <source>
    </source>
</evidence>
<evidence type="ECO:0000305" key="7"/>
<dbReference type="EMBL" id="AF319979">
    <property type="protein sequence ID" value="AAK01207.1"/>
    <property type="molecule type" value="mRNA"/>
</dbReference>
<dbReference type="EMBL" id="AK010294">
    <property type="protein sequence ID" value="BAB26830.1"/>
    <property type="molecule type" value="mRNA"/>
</dbReference>
<dbReference type="EMBL" id="AK017727">
    <property type="protein sequence ID" value="BAB30899.1"/>
    <property type="molecule type" value="mRNA"/>
</dbReference>
<dbReference type="EMBL" id="AK018250">
    <property type="protein sequence ID" value="BAB31133.1"/>
    <property type="molecule type" value="mRNA"/>
</dbReference>
<dbReference type="EMBL" id="AK049759">
    <property type="protein sequence ID" value="BAC33907.1"/>
    <property type="molecule type" value="mRNA"/>
</dbReference>
<dbReference type="EMBL" id="AK076471">
    <property type="protein sequence ID" value="BAC36358.1"/>
    <property type="molecule type" value="mRNA"/>
</dbReference>
<dbReference type="EMBL" id="BC034892">
    <property type="protein sequence ID" value="AAH34892.1"/>
    <property type="molecule type" value="mRNA"/>
</dbReference>
<dbReference type="EMBL" id="BC092289">
    <property type="protein sequence ID" value="AAH92289.2"/>
    <property type="molecule type" value="mRNA"/>
</dbReference>
<dbReference type="CCDS" id="CCDS21337.1"/>
<dbReference type="RefSeq" id="NP_075728.1">
    <property type="nucleotide sequence ID" value="NM_023239.5"/>
</dbReference>
<dbReference type="SMR" id="Q9CPR8"/>
<dbReference type="BioGRID" id="211620">
    <property type="interactions" value="2"/>
</dbReference>
<dbReference type="FunCoup" id="Q9CPR8">
    <property type="interactions" value="1984"/>
</dbReference>
<dbReference type="IntAct" id="Q9CPR8">
    <property type="interactions" value="3"/>
</dbReference>
<dbReference type="STRING" id="10090.ENSMUSP00000091889"/>
<dbReference type="GlyGen" id="Q9CPR8">
    <property type="glycosylation" value="1 site, 1 O-linked glycan (1 site)"/>
</dbReference>
<dbReference type="iPTMnet" id="Q9CPR8"/>
<dbReference type="PhosphoSitePlus" id="Q9CPR8"/>
<dbReference type="PaxDb" id="10090-ENSMUSP00000091889"/>
<dbReference type="ProteomicsDB" id="295529"/>
<dbReference type="Pumba" id="Q9CPR8"/>
<dbReference type="DNASU" id="66647"/>
<dbReference type="Ensembl" id="ENSMUST00000094331.5">
    <property type="protein sequence ID" value="ENSMUSP00000091889.3"/>
    <property type="gene ID" value="ENSMUSG00000070520.5"/>
</dbReference>
<dbReference type="GeneID" id="66647"/>
<dbReference type="KEGG" id="mmu:66647"/>
<dbReference type="UCSC" id="uc009hgm.1">
    <property type="organism name" value="mouse"/>
</dbReference>
<dbReference type="AGR" id="MGI:1913897"/>
<dbReference type="CTD" id="56160"/>
<dbReference type="MGI" id="MGI:1913897">
    <property type="gene designation" value="Nsmce3"/>
</dbReference>
<dbReference type="VEuPathDB" id="HostDB:ENSMUSG00000070520"/>
<dbReference type="eggNOG" id="KOG4562">
    <property type="taxonomic scope" value="Eukaryota"/>
</dbReference>
<dbReference type="GeneTree" id="ENSGT00940000163627"/>
<dbReference type="HOGENOM" id="CLU_039582_2_0_1"/>
<dbReference type="InParanoid" id="Q9CPR8"/>
<dbReference type="OMA" id="KITYSWG"/>
<dbReference type="OrthoDB" id="205198at2759"/>
<dbReference type="PhylomeDB" id="Q9CPR8"/>
<dbReference type="TreeFam" id="TF328505"/>
<dbReference type="Reactome" id="R-MMU-3108214">
    <property type="pathway name" value="SUMOylation of DNA damage response and repair proteins"/>
</dbReference>
<dbReference type="BioGRID-ORCS" id="66647">
    <property type="hits" value="26 hits in 110 CRISPR screens"/>
</dbReference>
<dbReference type="PRO" id="PR:Q9CPR8"/>
<dbReference type="Proteomes" id="UP000000589">
    <property type="component" value="Chromosome 7"/>
</dbReference>
<dbReference type="RNAct" id="Q9CPR8">
    <property type="molecule type" value="protein"/>
</dbReference>
<dbReference type="Bgee" id="ENSMUSG00000070520">
    <property type="expression patterns" value="Expressed in lobe of prostate and 253 other cell types or tissues"/>
</dbReference>
<dbReference type="GO" id="GO:0000781">
    <property type="term" value="C:chromosome, telomeric region"/>
    <property type="evidence" value="ECO:0007669"/>
    <property type="project" value="UniProtKB-SubCell"/>
</dbReference>
<dbReference type="GO" id="GO:0005737">
    <property type="term" value="C:cytoplasm"/>
    <property type="evidence" value="ECO:0007669"/>
    <property type="project" value="UniProtKB-SubCell"/>
</dbReference>
<dbReference type="GO" id="GO:0005634">
    <property type="term" value="C:nucleus"/>
    <property type="evidence" value="ECO:0007669"/>
    <property type="project" value="UniProtKB-SubCell"/>
</dbReference>
<dbReference type="GO" id="GO:0030915">
    <property type="term" value="C:Smc5-Smc6 complex"/>
    <property type="evidence" value="ECO:0000250"/>
    <property type="project" value="UniProtKB"/>
</dbReference>
<dbReference type="GO" id="GO:0046983">
    <property type="term" value="F:protein dimerization activity"/>
    <property type="evidence" value="ECO:0000250"/>
    <property type="project" value="UniProtKB"/>
</dbReference>
<dbReference type="GO" id="GO:0072711">
    <property type="term" value="P:cellular response to hydroxyurea"/>
    <property type="evidence" value="ECO:0000250"/>
    <property type="project" value="UniProtKB"/>
</dbReference>
<dbReference type="GO" id="GO:0071478">
    <property type="term" value="P:cellular response to radiation"/>
    <property type="evidence" value="ECO:0000250"/>
    <property type="project" value="UniProtKB"/>
</dbReference>
<dbReference type="GO" id="GO:0034644">
    <property type="term" value="P:cellular response to UV"/>
    <property type="evidence" value="ECO:0000250"/>
    <property type="project" value="UniProtKB"/>
</dbReference>
<dbReference type="GO" id="GO:0006310">
    <property type="term" value="P:DNA recombination"/>
    <property type="evidence" value="ECO:0007669"/>
    <property type="project" value="UniProtKB-KW"/>
</dbReference>
<dbReference type="GO" id="GO:0006281">
    <property type="term" value="P:DNA repair"/>
    <property type="evidence" value="ECO:0000250"/>
    <property type="project" value="UniProtKB"/>
</dbReference>
<dbReference type="GO" id="GO:0031398">
    <property type="term" value="P:positive regulation of protein ubiquitination"/>
    <property type="evidence" value="ECO:0000250"/>
    <property type="project" value="UniProtKB"/>
</dbReference>
<dbReference type="GO" id="GO:0006355">
    <property type="term" value="P:regulation of DNA-templated transcription"/>
    <property type="evidence" value="ECO:0000314"/>
    <property type="project" value="MGI"/>
</dbReference>
<dbReference type="FunFam" id="1.10.10.1200:FF:000003">
    <property type="entry name" value="MAGE family member F1"/>
    <property type="match status" value="1"/>
</dbReference>
<dbReference type="FunFam" id="1.10.10.1210:FF:000001">
    <property type="entry name" value="melanoma-associated antigen D1"/>
    <property type="match status" value="1"/>
</dbReference>
<dbReference type="Gene3D" id="1.10.10.1200">
    <property type="entry name" value="MAGE homology domain, winged helix WH1 motif"/>
    <property type="match status" value="1"/>
</dbReference>
<dbReference type="Gene3D" id="1.10.10.1210">
    <property type="entry name" value="MAGE homology domain, winged helix WH2 motif"/>
    <property type="match status" value="1"/>
</dbReference>
<dbReference type="InterPro" id="IPR037445">
    <property type="entry name" value="MAGE"/>
</dbReference>
<dbReference type="InterPro" id="IPR041898">
    <property type="entry name" value="MAGE_WH1"/>
</dbReference>
<dbReference type="InterPro" id="IPR041899">
    <property type="entry name" value="MAGE_WH2"/>
</dbReference>
<dbReference type="InterPro" id="IPR002190">
    <property type="entry name" value="MHD_dom"/>
</dbReference>
<dbReference type="PANTHER" id="PTHR11736">
    <property type="entry name" value="MELANOMA-ASSOCIATED ANTIGEN MAGE ANTIGEN"/>
    <property type="match status" value="1"/>
</dbReference>
<dbReference type="PANTHER" id="PTHR11736:SF163">
    <property type="entry name" value="NON-STRUCTURAL MAINTENANCE OF CHROMOSOMES ELEMENT 3 HOMOLOG"/>
    <property type="match status" value="1"/>
</dbReference>
<dbReference type="Pfam" id="PF01454">
    <property type="entry name" value="MAGE"/>
    <property type="match status" value="1"/>
</dbReference>
<dbReference type="SMART" id="SM01373">
    <property type="entry name" value="MAGE"/>
    <property type="match status" value="1"/>
</dbReference>
<dbReference type="PROSITE" id="PS50838">
    <property type="entry name" value="MAGE"/>
    <property type="match status" value="1"/>
</dbReference>
<feature type="chain" id="PRO_0000156734" description="Non-structural maintenance of chromosomes element 3 homolog">
    <location>
        <begin position="1"/>
        <end position="279"/>
    </location>
</feature>
<feature type="domain" description="MAGE" evidence="3">
    <location>
        <begin position="59"/>
        <end position="259"/>
    </location>
</feature>
<feature type="region of interest" description="Disordered" evidence="4">
    <location>
        <begin position="1"/>
        <end position="52"/>
    </location>
</feature>
<feature type="region of interest" description="Interaction with NSMCE1" evidence="1">
    <location>
        <begin position="52"/>
        <end position="279"/>
    </location>
</feature>
<feature type="compositionally biased region" description="Low complexity" evidence="4">
    <location>
        <begin position="30"/>
        <end position="48"/>
    </location>
</feature>
<feature type="modified residue" description="Phosphoserine" evidence="2">
    <location>
        <position position="38"/>
    </location>
</feature>
<feature type="sequence conflict" description="In Ref. 2; BAB31133." evidence="7" ref="2">
    <original>G</original>
    <variation>A</variation>
    <location>
        <position position="36"/>
    </location>
</feature>
<comment type="function">
    <text evidence="2 6">Component of the SMC5-SMC6 complex, a complex involved in repair of DNA double-strand breaks by homologous recombination. The complex may promote sister chromatid homologous recombination by recruiting the SMC1-SMC3 cohesin complex to double-strand breaks. The complex is required for telomere maintenance via recombination in ALT (alternative lengthening of telomeres) cell lines and mediates sumoylation of shelterin complex (telosome) components which is proposed to lead to shelterin complex disassembly in ALT-associated PML bodies (APBs). In vitro enhances ubiquitin ligase activity of NSMCE1. Proposed to act through recruitment and/or stabilization of the Ubl-conjugating enzyme (E2) at the E3:substrate complex (By similarity). May be a growth suppressor that facilitates the entry of the cell into cell cycle arrest (PubMed:14593116).</text>
</comment>
<comment type="subunit">
    <text evidence="2 6">Component of the SMC5-SMC6 complex which consists at least of SMC5, SMC6, NSMCE2, NSMCE1, NSMCE4A or EID3 and NSMCE3. NSMCE1, NSMCE4A or EID3 and NSMCE3 probably form a subcomplex that bridges the head domains of the SMC5:SMC6 heterodimer. Interacts with PJA1 (By similarity). Interacts with E2F1 (via C-terminus) (PubMed:14593116). Interacts with NGFR (via C-terminus) (PubMed:14593116). Interacts with NSMCE1. Interacts with NSMCE4. Interacts with SMC6. Interacts with EID3 (By similarity).</text>
</comment>
<comment type="interaction">
    <interactant intactId="EBI-5529102">
        <id>Q9CPR8</id>
    </interactant>
    <interactant intactId="EBI-1025536">
        <id>Q61501</id>
        <label>E2f1</label>
    </interactant>
    <organismsDiffer>false</organismsDiffer>
    <experiments>5</experiments>
</comment>
<comment type="interaction">
    <interactant intactId="EBI-5529102">
        <id>Q9CPR8</id>
    </interactant>
    <interactant intactId="EBI-1387782">
        <id>P08138</id>
        <label>NGFR</label>
    </interactant>
    <organismsDiffer>true</organismsDiffer>
    <experiments>3</experiments>
</comment>
<comment type="subcellular location">
    <subcellularLocation>
        <location evidence="6">Cytoplasm</location>
    </subcellularLocation>
    <subcellularLocation>
        <location evidence="6">Nucleus</location>
    </subcellularLocation>
    <subcellularLocation>
        <location evidence="1">Chromosome</location>
        <location evidence="1">Telomere</location>
    </subcellularLocation>
</comment>
<comment type="tissue specificity">
    <text evidence="5 6">Ubiquitous.</text>
</comment>
<protein>
    <recommendedName>
        <fullName>Non-structural maintenance of chromosomes element 3 homolog</fullName>
        <shortName>Non-SMC element 3 homolog</shortName>
    </recommendedName>
    <alternativeName>
        <fullName>MAGE-G1 antigen</fullName>
    </alternativeName>
    <alternativeName>
        <fullName>Necdin-like protein 2</fullName>
    </alternativeName>
</protein>
<reference key="1">
    <citation type="submission" date="2000-11" db="EMBL/GenBank/DDBJ databases">
        <title>Ten new murine members of the MAGE gene family.</title>
        <authorList>
            <person name="Auquier P.H."/>
            <person name="Chomez P.M."/>
            <person name="De Backer O.R."/>
            <person name="Bertrand M.J.M."/>
        </authorList>
    </citation>
    <scope>NUCLEOTIDE SEQUENCE [MRNA]</scope>
</reference>
<reference key="2">
    <citation type="journal article" date="2005" name="Science">
        <title>The transcriptional landscape of the mammalian genome.</title>
        <authorList>
            <person name="Carninci P."/>
            <person name="Kasukawa T."/>
            <person name="Katayama S."/>
            <person name="Gough J."/>
            <person name="Frith M.C."/>
            <person name="Maeda N."/>
            <person name="Oyama R."/>
            <person name="Ravasi T."/>
            <person name="Lenhard B."/>
            <person name="Wells C."/>
            <person name="Kodzius R."/>
            <person name="Shimokawa K."/>
            <person name="Bajic V.B."/>
            <person name="Brenner S.E."/>
            <person name="Batalov S."/>
            <person name="Forrest A.R."/>
            <person name="Zavolan M."/>
            <person name="Davis M.J."/>
            <person name="Wilming L.G."/>
            <person name="Aidinis V."/>
            <person name="Allen J.E."/>
            <person name="Ambesi-Impiombato A."/>
            <person name="Apweiler R."/>
            <person name="Aturaliya R.N."/>
            <person name="Bailey T.L."/>
            <person name="Bansal M."/>
            <person name="Baxter L."/>
            <person name="Beisel K.W."/>
            <person name="Bersano T."/>
            <person name="Bono H."/>
            <person name="Chalk A.M."/>
            <person name="Chiu K.P."/>
            <person name="Choudhary V."/>
            <person name="Christoffels A."/>
            <person name="Clutterbuck D.R."/>
            <person name="Crowe M.L."/>
            <person name="Dalla E."/>
            <person name="Dalrymple B.P."/>
            <person name="de Bono B."/>
            <person name="Della Gatta G."/>
            <person name="di Bernardo D."/>
            <person name="Down T."/>
            <person name="Engstrom P."/>
            <person name="Fagiolini M."/>
            <person name="Faulkner G."/>
            <person name="Fletcher C.F."/>
            <person name="Fukushima T."/>
            <person name="Furuno M."/>
            <person name="Futaki S."/>
            <person name="Gariboldi M."/>
            <person name="Georgii-Hemming P."/>
            <person name="Gingeras T.R."/>
            <person name="Gojobori T."/>
            <person name="Green R.E."/>
            <person name="Gustincich S."/>
            <person name="Harbers M."/>
            <person name="Hayashi Y."/>
            <person name="Hensch T.K."/>
            <person name="Hirokawa N."/>
            <person name="Hill D."/>
            <person name="Huminiecki L."/>
            <person name="Iacono M."/>
            <person name="Ikeo K."/>
            <person name="Iwama A."/>
            <person name="Ishikawa T."/>
            <person name="Jakt M."/>
            <person name="Kanapin A."/>
            <person name="Katoh M."/>
            <person name="Kawasawa Y."/>
            <person name="Kelso J."/>
            <person name="Kitamura H."/>
            <person name="Kitano H."/>
            <person name="Kollias G."/>
            <person name="Krishnan S.P."/>
            <person name="Kruger A."/>
            <person name="Kummerfeld S.K."/>
            <person name="Kurochkin I.V."/>
            <person name="Lareau L.F."/>
            <person name="Lazarevic D."/>
            <person name="Lipovich L."/>
            <person name="Liu J."/>
            <person name="Liuni S."/>
            <person name="McWilliam S."/>
            <person name="Madan Babu M."/>
            <person name="Madera M."/>
            <person name="Marchionni L."/>
            <person name="Matsuda H."/>
            <person name="Matsuzawa S."/>
            <person name="Miki H."/>
            <person name="Mignone F."/>
            <person name="Miyake S."/>
            <person name="Morris K."/>
            <person name="Mottagui-Tabar S."/>
            <person name="Mulder N."/>
            <person name="Nakano N."/>
            <person name="Nakauchi H."/>
            <person name="Ng P."/>
            <person name="Nilsson R."/>
            <person name="Nishiguchi S."/>
            <person name="Nishikawa S."/>
            <person name="Nori F."/>
            <person name="Ohara O."/>
            <person name="Okazaki Y."/>
            <person name="Orlando V."/>
            <person name="Pang K.C."/>
            <person name="Pavan W.J."/>
            <person name="Pavesi G."/>
            <person name="Pesole G."/>
            <person name="Petrovsky N."/>
            <person name="Piazza S."/>
            <person name="Reed J."/>
            <person name="Reid J.F."/>
            <person name="Ring B.Z."/>
            <person name="Ringwald M."/>
            <person name="Rost B."/>
            <person name="Ruan Y."/>
            <person name="Salzberg S.L."/>
            <person name="Sandelin A."/>
            <person name="Schneider C."/>
            <person name="Schoenbach C."/>
            <person name="Sekiguchi K."/>
            <person name="Semple C.A."/>
            <person name="Seno S."/>
            <person name="Sessa L."/>
            <person name="Sheng Y."/>
            <person name="Shibata Y."/>
            <person name="Shimada H."/>
            <person name="Shimada K."/>
            <person name="Silva D."/>
            <person name="Sinclair B."/>
            <person name="Sperling S."/>
            <person name="Stupka E."/>
            <person name="Sugiura K."/>
            <person name="Sultana R."/>
            <person name="Takenaka Y."/>
            <person name="Taki K."/>
            <person name="Tammoja K."/>
            <person name="Tan S.L."/>
            <person name="Tang S."/>
            <person name="Taylor M.S."/>
            <person name="Tegner J."/>
            <person name="Teichmann S.A."/>
            <person name="Ueda H.R."/>
            <person name="van Nimwegen E."/>
            <person name="Verardo R."/>
            <person name="Wei C.L."/>
            <person name="Yagi K."/>
            <person name="Yamanishi H."/>
            <person name="Zabarovsky E."/>
            <person name="Zhu S."/>
            <person name="Zimmer A."/>
            <person name="Hide W."/>
            <person name="Bult C."/>
            <person name="Grimmond S.M."/>
            <person name="Teasdale R.D."/>
            <person name="Liu E.T."/>
            <person name="Brusic V."/>
            <person name="Quackenbush J."/>
            <person name="Wahlestedt C."/>
            <person name="Mattick J.S."/>
            <person name="Hume D.A."/>
            <person name="Kai C."/>
            <person name="Sasaki D."/>
            <person name="Tomaru Y."/>
            <person name="Fukuda S."/>
            <person name="Kanamori-Katayama M."/>
            <person name="Suzuki M."/>
            <person name="Aoki J."/>
            <person name="Arakawa T."/>
            <person name="Iida J."/>
            <person name="Imamura K."/>
            <person name="Itoh M."/>
            <person name="Kato T."/>
            <person name="Kawaji H."/>
            <person name="Kawagashira N."/>
            <person name="Kawashima T."/>
            <person name="Kojima M."/>
            <person name="Kondo S."/>
            <person name="Konno H."/>
            <person name="Nakano K."/>
            <person name="Ninomiya N."/>
            <person name="Nishio T."/>
            <person name="Okada M."/>
            <person name="Plessy C."/>
            <person name="Shibata K."/>
            <person name="Shiraki T."/>
            <person name="Suzuki S."/>
            <person name="Tagami M."/>
            <person name="Waki K."/>
            <person name="Watahiki A."/>
            <person name="Okamura-Oho Y."/>
            <person name="Suzuki H."/>
            <person name="Kawai J."/>
            <person name="Hayashizaki Y."/>
        </authorList>
    </citation>
    <scope>NUCLEOTIDE SEQUENCE [LARGE SCALE MRNA]</scope>
    <source>
        <strain>C57BL/6J</strain>
        <tissue>Embryo</tissue>
        <tissue>Embryonic stem cell</tissue>
        <tissue>Head</tissue>
        <tissue>Medulla oblongata</tissue>
        <tissue>Spinal cord</tissue>
    </source>
</reference>
<reference key="3">
    <citation type="journal article" date="2004" name="Genome Res.">
        <title>The status, quality, and expansion of the NIH full-length cDNA project: the Mammalian Gene Collection (MGC).</title>
        <authorList>
            <consortium name="The MGC Project Team"/>
        </authorList>
    </citation>
    <scope>NUCLEOTIDE SEQUENCE [LARGE SCALE MRNA]</scope>
    <source>
        <strain>FVB/N</strain>
        <tissue>Colon</tissue>
        <tissue>Mammary gland</tissue>
    </source>
</reference>
<reference key="4">
    <citation type="journal article" date="2001" name="BMC Genet.">
        <title>A necdin/MAGE-like gene in the chromosome 15 autism susceptibility region: expression, imprinting, and mapping of the human and mouse orthologues.</title>
        <authorList>
            <person name="Chibuk T.K."/>
            <person name="Bischof J.M."/>
            <person name="Wevrick R."/>
        </authorList>
    </citation>
    <scope>TISSUE SPECIFICITY</scope>
</reference>
<reference key="5">
    <citation type="journal article" date="2004" name="J. Biol. Chem.">
        <title>Necdin-related MAGE proteins differentially interact with the E2F1 transcription factor and the p75 neurotrophin receptor.</title>
        <authorList>
            <person name="Kuwako K."/>
            <person name="Taniura H."/>
            <person name="Yoshikawa K."/>
        </authorList>
    </citation>
    <scope>POSSIBLE FUNCTION</scope>
    <scope>INTERACTION WITH E2F1 AND NGFR</scope>
    <scope>SUBCELLULAR LOCATION</scope>
    <scope>TISSUE SPECIFICITY</scope>
</reference>
<reference key="6">
    <citation type="journal article" date="2010" name="Cell">
        <title>A tissue-specific atlas of mouse protein phosphorylation and expression.</title>
        <authorList>
            <person name="Huttlin E.L."/>
            <person name="Jedrychowski M.P."/>
            <person name="Elias J.E."/>
            <person name="Goswami T."/>
            <person name="Rad R."/>
            <person name="Beausoleil S.A."/>
            <person name="Villen J."/>
            <person name="Haas W."/>
            <person name="Sowa M.E."/>
            <person name="Gygi S.P."/>
        </authorList>
    </citation>
    <scope>IDENTIFICATION BY MASS SPECTROMETRY [LARGE SCALE ANALYSIS]</scope>
    <source>
        <tissue>Spleen</tissue>
        <tissue>Testis</tissue>
    </source>
</reference>
<name>NSE3_MOUSE</name>
<accession>Q9CPR8</accession>
<accession>Q569V7</accession>
<accession>Q9D378</accession>
<proteinExistence type="evidence at protein level"/>
<gene>
    <name type="primary">Nsmce3</name>
    <name type="synonym">Mageg1</name>
    <name type="synonym">Ndnl2</name>
</gene>
<sequence>MLQKPRGRGRPSTQADPERDWGGAGEEGPSTSRAAGGSSQGSRASLSAPTVGPRTQKQLELKVAELVQFLLIKDQKKIPIKRTDILKHVVGDYRDVYPNLLKLAAERLQYVFGYKLVELEPKSHSYILINMLEPVEADAEMRGDQGTPISGLLMIVLGLIFMKGNTITETEVWDFLRRLGVYPTKKHLIFGDPKKLITEDFVRQRYLEYRRIPHTDPVDYELQWGPRTNLETSKMKVLKFVAKVHNQDPKDWPTQYCEALADEESRARPATASAPATSS</sequence>